<comment type="function">
    <text evidence="2">Methionine-sulfoxide reductase that specifically reduces methionine (R)-sulfoxide back to methionine. While in many cases, methionine oxidation is the result of random oxidation following oxidative stress, methionine oxidation is also a post-translational modification that takes place on specific residue. Acts as a regulator of actin assembly by reducing methionine (R)-sulfoxide mediated by MICALs (MICAL1, MICAL2 or MICAL3) on actin, thereby promoting filament repolymerization. Plays a role in innate immunity by reducing oxidized actin, leading to actin repolymerization in macrophages.</text>
</comment>
<comment type="catalytic activity">
    <reaction evidence="2">
        <text>L-methionyl-[protein] + [thioredoxin]-disulfide + H2O = L-methionyl-(R)-S-oxide-[protein] + [thioredoxin]-dithiol</text>
        <dbReference type="Rhea" id="RHEA:24164"/>
        <dbReference type="Rhea" id="RHEA-COMP:10698"/>
        <dbReference type="Rhea" id="RHEA-COMP:10700"/>
        <dbReference type="Rhea" id="RHEA-COMP:12313"/>
        <dbReference type="Rhea" id="RHEA-COMP:12314"/>
        <dbReference type="ChEBI" id="CHEBI:15377"/>
        <dbReference type="ChEBI" id="CHEBI:16044"/>
        <dbReference type="ChEBI" id="CHEBI:29950"/>
        <dbReference type="ChEBI" id="CHEBI:45764"/>
        <dbReference type="ChEBI" id="CHEBI:50058"/>
        <dbReference type="EC" id="1.8.4.12"/>
    </reaction>
</comment>
<comment type="catalytic activity">
    <reaction evidence="2">
        <text>[thioredoxin]-disulfide + L-methionine + H2O = L-methionine (R)-S-oxide + [thioredoxin]-dithiol</text>
        <dbReference type="Rhea" id="RHEA:21260"/>
        <dbReference type="Rhea" id="RHEA-COMP:10698"/>
        <dbReference type="Rhea" id="RHEA-COMP:10700"/>
        <dbReference type="ChEBI" id="CHEBI:15377"/>
        <dbReference type="ChEBI" id="CHEBI:29950"/>
        <dbReference type="ChEBI" id="CHEBI:50058"/>
        <dbReference type="ChEBI" id="CHEBI:57844"/>
        <dbReference type="ChEBI" id="CHEBI:58773"/>
        <dbReference type="EC" id="1.8.4.14"/>
    </reaction>
</comment>
<comment type="cofactor">
    <cofactor evidence="2">
        <name>Zn(2+)</name>
        <dbReference type="ChEBI" id="CHEBI:29105"/>
    </cofactor>
    <text evidence="2">Binds 1 zinc ion per subunit.</text>
</comment>
<comment type="subcellular location">
    <subcellularLocation>
        <location evidence="1">Cytoplasm</location>
    </subcellularLocation>
    <subcellularLocation>
        <location evidence="1">Nucleus</location>
    </subcellularLocation>
    <subcellularLocation>
        <location evidence="1">Cytoplasm</location>
        <location evidence="1">Cytoskeleton</location>
    </subcellularLocation>
</comment>
<comment type="PTM">
    <text evidence="3">Truncated MSRB1/SEPX1 proteins produced by failed UGA/Sec decoding are ubiquitinated by the CRL2(FEM1C) E3 ubiquitin-protein ligase complex.</text>
</comment>
<comment type="similarity">
    <text evidence="5">Belongs to the MsrB Met sulfoxide reductase family.</text>
</comment>
<dbReference type="EC" id="1.8.4.12" evidence="2"/>
<dbReference type="EC" id="1.8.4.14" evidence="2"/>
<dbReference type="EMBL" id="CR859820">
    <property type="protein sequence ID" value="CAH91977.1"/>
    <property type="molecule type" value="mRNA"/>
</dbReference>
<dbReference type="EMBL" id="CR859885">
    <property type="protein sequence ID" value="CAH92041.1"/>
    <property type="molecule type" value="mRNA"/>
</dbReference>
<dbReference type="RefSeq" id="NP_001126146.1">
    <property type="nucleotide sequence ID" value="NM_001132674.1"/>
</dbReference>
<dbReference type="FunCoup" id="Q5R869">
    <property type="interactions" value="82"/>
</dbReference>
<dbReference type="STRING" id="9601.ENSPPYP00000007893"/>
<dbReference type="GeneID" id="100173105"/>
<dbReference type="KEGG" id="pon:100173105"/>
<dbReference type="CTD" id="51734"/>
<dbReference type="eggNOG" id="KOG0856">
    <property type="taxonomic scope" value="Eukaryota"/>
</dbReference>
<dbReference type="InParanoid" id="Q5R869"/>
<dbReference type="OrthoDB" id="44061at2759"/>
<dbReference type="Proteomes" id="UP000001595">
    <property type="component" value="Unplaced"/>
</dbReference>
<dbReference type="GO" id="GO:0005737">
    <property type="term" value="C:cytoplasm"/>
    <property type="evidence" value="ECO:0007669"/>
    <property type="project" value="UniProtKB-SubCell"/>
</dbReference>
<dbReference type="GO" id="GO:0005856">
    <property type="term" value="C:cytoskeleton"/>
    <property type="evidence" value="ECO:0007669"/>
    <property type="project" value="UniProtKB-SubCell"/>
</dbReference>
<dbReference type="GO" id="GO:0005634">
    <property type="term" value="C:nucleus"/>
    <property type="evidence" value="ECO:0007669"/>
    <property type="project" value="UniProtKB-SubCell"/>
</dbReference>
<dbReference type="GO" id="GO:0003779">
    <property type="term" value="F:actin binding"/>
    <property type="evidence" value="ECO:0000250"/>
    <property type="project" value="UniProtKB"/>
</dbReference>
<dbReference type="GO" id="GO:0033745">
    <property type="term" value="F:L-methionine-(R)-S-oxide reductase activity"/>
    <property type="evidence" value="ECO:0007669"/>
    <property type="project" value="UniProtKB-EC"/>
</dbReference>
<dbReference type="GO" id="GO:0046872">
    <property type="term" value="F:metal ion binding"/>
    <property type="evidence" value="ECO:0007669"/>
    <property type="project" value="UniProtKB-KW"/>
</dbReference>
<dbReference type="GO" id="GO:0033743">
    <property type="term" value="F:peptide-methionine (R)-S-oxide reductase activity"/>
    <property type="evidence" value="ECO:0000250"/>
    <property type="project" value="UniProtKB"/>
</dbReference>
<dbReference type="GO" id="GO:0030041">
    <property type="term" value="P:actin filament polymerization"/>
    <property type="evidence" value="ECO:0000250"/>
    <property type="project" value="UniProtKB"/>
</dbReference>
<dbReference type="GO" id="GO:0045087">
    <property type="term" value="P:innate immune response"/>
    <property type="evidence" value="ECO:0000250"/>
    <property type="project" value="UniProtKB"/>
</dbReference>
<dbReference type="GO" id="GO:0030091">
    <property type="term" value="P:protein repair"/>
    <property type="evidence" value="ECO:0007669"/>
    <property type="project" value="TreeGrafter"/>
</dbReference>
<dbReference type="FunFam" id="2.170.150.20:FF:000008">
    <property type="entry name" value="methionine-R-sulfoxide reductase B1"/>
    <property type="match status" value="1"/>
</dbReference>
<dbReference type="Gene3D" id="2.170.150.20">
    <property type="entry name" value="Peptide methionine sulfoxide reductase"/>
    <property type="match status" value="1"/>
</dbReference>
<dbReference type="InterPro" id="IPR002579">
    <property type="entry name" value="Met_Sox_Rdtase_MsrB_dom"/>
</dbReference>
<dbReference type="InterPro" id="IPR052150">
    <property type="entry name" value="MsrB_Met_sulfoxide_reductase"/>
</dbReference>
<dbReference type="InterPro" id="IPR011057">
    <property type="entry name" value="Mss4-like_sf"/>
</dbReference>
<dbReference type="PANTHER" id="PTHR46755">
    <property type="entry name" value="METHIONINE-R-SULFOXIDE REDUCTASE B1"/>
    <property type="match status" value="1"/>
</dbReference>
<dbReference type="PANTHER" id="PTHR46755:SF5">
    <property type="entry name" value="METHIONINE-R-SULFOXIDE REDUCTASE B1"/>
    <property type="match status" value="1"/>
</dbReference>
<dbReference type="Pfam" id="PF01641">
    <property type="entry name" value="SelR"/>
    <property type="match status" value="1"/>
</dbReference>
<dbReference type="SUPFAM" id="SSF51316">
    <property type="entry name" value="Mss4-like"/>
    <property type="match status" value="1"/>
</dbReference>
<dbReference type="PROSITE" id="PS51790">
    <property type="entry name" value="MSRB"/>
    <property type="match status" value="1"/>
</dbReference>
<name>MSRB1_PONAB</name>
<proteinExistence type="inferred from homology"/>
<reference key="1">
    <citation type="submission" date="2004-11" db="EMBL/GenBank/DDBJ databases">
        <authorList>
            <consortium name="The German cDNA consortium"/>
        </authorList>
    </citation>
    <scope>NUCLEOTIDE SEQUENCE [LARGE SCALE MRNA]</scope>
    <source>
        <tissue>Kidney</tissue>
    </source>
</reference>
<keyword id="KW-0963">Cytoplasm</keyword>
<keyword id="KW-0206">Cytoskeleton</keyword>
<keyword id="KW-0391">Immunity</keyword>
<keyword id="KW-0399">Innate immunity</keyword>
<keyword id="KW-0479">Metal-binding</keyword>
<keyword id="KW-0539">Nucleus</keyword>
<keyword id="KW-0560">Oxidoreductase</keyword>
<keyword id="KW-1185">Reference proteome</keyword>
<keyword id="KW-0712">Selenocysteine</keyword>
<keyword id="KW-0832">Ubl conjugation</keyword>
<keyword id="KW-0862">Zinc</keyword>
<feature type="chain" id="PRO_0000249713" description="Methionine-R-sulfoxide reductase B1">
    <location>
        <begin position="1"/>
        <end position="116"/>
    </location>
</feature>
<feature type="domain" description="MsrB" evidence="4">
    <location>
        <begin position="1"/>
        <end position="106"/>
    </location>
</feature>
<feature type="active site" description="Nucleophile" evidence="4">
    <location>
        <position position="95"/>
    </location>
</feature>
<feature type="binding site" evidence="4">
    <location>
        <position position="23"/>
    </location>
    <ligand>
        <name>Zn(2+)</name>
        <dbReference type="ChEBI" id="CHEBI:29105"/>
    </ligand>
</feature>
<feature type="binding site" evidence="4">
    <location>
        <position position="26"/>
    </location>
    <ligand>
        <name>Zn(2+)</name>
        <dbReference type="ChEBI" id="CHEBI:29105"/>
    </ligand>
</feature>
<feature type="binding site" evidence="4">
    <location>
        <position position="71"/>
    </location>
    <ligand>
        <name>Zn(2+)</name>
        <dbReference type="ChEBI" id="CHEBI:29105"/>
    </ligand>
</feature>
<feature type="binding site" evidence="4">
    <location>
        <position position="74"/>
    </location>
    <ligand>
        <name>Zn(2+)</name>
        <dbReference type="ChEBI" id="CHEBI:29105"/>
    </ligand>
</feature>
<feature type="non-standard amino acid" description="Selenocysteine" evidence="3">
    <location>
        <position position="95"/>
    </location>
</feature>
<accession>Q5R869</accession>
<organism>
    <name type="scientific">Pongo abelii</name>
    <name type="common">Sumatran orangutan</name>
    <name type="synonym">Pongo pygmaeus abelii</name>
    <dbReference type="NCBI Taxonomy" id="9601"/>
    <lineage>
        <taxon>Eukaryota</taxon>
        <taxon>Metazoa</taxon>
        <taxon>Chordata</taxon>
        <taxon>Craniata</taxon>
        <taxon>Vertebrata</taxon>
        <taxon>Euteleostomi</taxon>
        <taxon>Mammalia</taxon>
        <taxon>Eutheria</taxon>
        <taxon>Euarchontoglires</taxon>
        <taxon>Primates</taxon>
        <taxon>Haplorrhini</taxon>
        <taxon>Catarrhini</taxon>
        <taxon>Hominidae</taxon>
        <taxon>Pongo</taxon>
    </lineage>
</organism>
<gene>
    <name type="primary">MSRB1</name>
    <name type="synonym">SEPX1</name>
</gene>
<protein>
    <recommendedName>
        <fullName>Methionine-R-sulfoxide reductase B1</fullName>
        <shortName>MsrB1</shortName>
        <ecNumber evidence="2">1.8.4.12</ecNumber>
        <ecNumber evidence="2">1.8.4.14</ecNumber>
    </recommendedName>
    <alternativeName>
        <fullName>Selenoprotein X</fullName>
        <shortName>SelX</shortName>
    </alternativeName>
</protein>
<sequence length="116" mass="12744">MSFCSFFGGEVFQNHFEPGVYVCAKCGYELFSSRSKYAHSSPWPAFTETIHADSVAKRPEHNRAEALKVSCGKCGNGLGHEFLNDGPKPGQSRFUIFSSSLKFVPKGKETSASQGH</sequence>
<evidence type="ECO:0000250" key="1"/>
<evidence type="ECO:0000250" key="2">
    <source>
        <dbReference type="UniProtKB" id="Q9JLC3"/>
    </source>
</evidence>
<evidence type="ECO:0000250" key="3">
    <source>
        <dbReference type="UniProtKB" id="Q9NZV6"/>
    </source>
</evidence>
<evidence type="ECO:0000255" key="4">
    <source>
        <dbReference type="PROSITE-ProRule" id="PRU01126"/>
    </source>
</evidence>
<evidence type="ECO:0000305" key="5"/>